<organism>
    <name type="scientific">Scyliorhinus canicula</name>
    <name type="common">Small-spotted catshark</name>
    <name type="synonym">Squalus canicula</name>
    <dbReference type="NCBI Taxonomy" id="7830"/>
    <lineage>
        <taxon>Eukaryota</taxon>
        <taxon>Metazoa</taxon>
        <taxon>Chordata</taxon>
        <taxon>Craniata</taxon>
        <taxon>Vertebrata</taxon>
        <taxon>Chondrichthyes</taxon>
        <taxon>Elasmobranchii</taxon>
        <taxon>Galeomorphii</taxon>
        <taxon>Galeoidea</taxon>
        <taxon>Carcharhiniformes</taxon>
        <taxon>Scyliorhinidae</taxon>
        <taxon>Scyliorhinus</taxon>
    </lineage>
</organism>
<sequence length="354" mass="39761">MNGTEGENFYIPMSNKTGVVRSPFDYPQYYLAEPWKFSVLAAYMFFLIIAGFPVNFLTLYVTIQHKKLRQPLNYILLNLAVADLFMIFGGFPSTMITSMNGYFVFGPSGCNFEGFFATLGGEIGLWSLVVLAIERYVVVCKPMSNFRFGSQHAFMGVGLTWIMAMACAFPPLVGWSRYIPEGMQCSCGIDYYTLKPEVNNESFVIYMFVVHFSIPLTIIFFCYGRLVCTVKEAAAQQQESETTQRAEREVTRMVIIMVIAFLICWLPYASVAFFIFCNQGSEFGPIFMTIPAFFAKAASLYNPLIYILMNKQFRNCMITTICCGKNPFEEEESTSASASKTEASSVSSSQVAPA</sequence>
<evidence type="ECO:0000250" key="1">
    <source>
        <dbReference type="UniProtKB" id="P02699"/>
    </source>
</evidence>
<evidence type="ECO:0000250" key="2">
    <source>
        <dbReference type="UniProtKB" id="P08100"/>
    </source>
</evidence>
<evidence type="ECO:0000250" key="3">
    <source>
        <dbReference type="UniProtKB" id="P32309"/>
    </source>
</evidence>
<evidence type="ECO:0000250" key="4">
    <source>
        <dbReference type="UniProtKB" id="P35359"/>
    </source>
</evidence>
<evidence type="ECO:0000255" key="5"/>
<evidence type="ECO:0000255" key="6">
    <source>
        <dbReference type="PROSITE-ProRule" id="PRU00521"/>
    </source>
</evidence>
<evidence type="ECO:0000256" key="7">
    <source>
        <dbReference type="SAM" id="MobiDB-lite"/>
    </source>
</evidence>
<evidence type="ECO:0000305" key="8"/>
<name>OPSD_SCYCA</name>
<gene>
    <name type="primary">rho</name>
</gene>
<reference key="1">
    <citation type="submission" date="1998-06" db="EMBL/GenBank/DDBJ databases">
        <title>Adaptational features of the photoreceptor system in the retinae of two species of dogfish: relationships with feeding habits and depth distribution.</title>
        <authorList>
            <person name="Bozzano A."/>
            <person name="Murgia R."/>
            <person name="Vallerga S."/>
            <person name="Hirano J."/>
            <person name="Archer S.N."/>
        </authorList>
    </citation>
    <scope>NUCLEOTIDE SEQUENCE [MRNA]</scope>
    <source>
        <tissue>Retina</tissue>
    </source>
</reference>
<comment type="function">
    <text evidence="1 2 3">Photoreceptor required for image-forming vision at low light intensity. While most salt water fish species use retinal as chromophore, most freshwater fish use 3-dehydroretinal, or a mixture of retinal and 3-dehydroretinal (By similarity). Light-induced isomerization of 11-cis to all-trans retinal triggers a conformational change that activates signaling via G-proteins. Subsequent receptor phosphorylation mediates displacement of the bound G-protein alpha subunit by arrestin and terminates signaling (By similarity).</text>
</comment>
<comment type="subcellular location">
    <subcellularLocation>
        <location evidence="2">Membrane</location>
        <topology evidence="2">Multi-pass membrane protein</topology>
    </subcellularLocation>
    <subcellularLocation>
        <location evidence="4">Cell projection</location>
        <location evidence="4">Cilium</location>
        <location evidence="4">Photoreceptor outer segment</location>
    </subcellularLocation>
    <text evidence="2">Synthesized in the inner segment (IS) of rod photoreceptor cells before vectorial transport to disk membranes in the rod outer segment (OS) photosensory cilia.</text>
</comment>
<comment type="PTM">
    <text evidence="1">Phosphorylated on some or all of the serine and threonine residues present in the C-terminal region.</text>
</comment>
<comment type="PTM">
    <text evidence="1">Contains one covalently linked retinal chromophore.</text>
</comment>
<comment type="similarity">
    <text evidence="6">Belongs to the G-protein coupled receptor 1 family. Opsin subfamily.</text>
</comment>
<proteinExistence type="evidence at transcript level"/>
<feature type="chain" id="PRO_0000197718" description="Rhodopsin">
    <location>
        <begin position="1"/>
        <end position="354"/>
    </location>
</feature>
<feature type="topological domain" description="Extracellular" evidence="8">
    <location>
        <begin position="1"/>
        <end position="36"/>
    </location>
</feature>
<feature type="transmembrane region" description="Helical; Name=1" evidence="1">
    <location>
        <begin position="37"/>
        <end position="61"/>
    </location>
</feature>
<feature type="topological domain" description="Cytoplasmic" evidence="8">
    <location>
        <begin position="62"/>
        <end position="73"/>
    </location>
</feature>
<feature type="transmembrane region" description="Helical; Name=2" evidence="1">
    <location>
        <begin position="74"/>
        <end position="96"/>
    </location>
</feature>
<feature type="topological domain" description="Extracellular" evidence="8">
    <location>
        <begin position="97"/>
        <end position="110"/>
    </location>
</feature>
<feature type="transmembrane region" description="Helical; Name=3" evidence="1">
    <location>
        <begin position="111"/>
        <end position="133"/>
    </location>
</feature>
<feature type="topological domain" description="Cytoplasmic" evidence="8">
    <location>
        <begin position="134"/>
        <end position="152"/>
    </location>
</feature>
<feature type="transmembrane region" description="Helical; Name=4" evidence="1">
    <location>
        <begin position="153"/>
        <end position="173"/>
    </location>
</feature>
<feature type="topological domain" description="Extracellular" evidence="8">
    <location>
        <begin position="174"/>
        <end position="202"/>
    </location>
</feature>
<feature type="transmembrane region" description="Helical; Name=5" evidence="1">
    <location>
        <begin position="203"/>
        <end position="224"/>
    </location>
</feature>
<feature type="topological domain" description="Cytoplasmic" evidence="8">
    <location>
        <begin position="225"/>
        <end position="252"/>
    </location>
</feature>
<feature type="transmembrane region" description="Helical; Name=6" evidence="1">
    <location>
        <begin position="253"/>
        <end position="274"/>
    </location>
</feature>
<feature type="topological domain" description="Extracellular" evidence="8">
    <location>
        <begin position="275"/>
        <end position="286"/>
    </location>
</feature>
<feature type="transmembrane region" description="Helical; Name=7" evidence="1">
    <location>
        <begin position="287"/>
        <end position="308"/>
    </location>
</feature>
<feature type="topological domain" description="Cytoplasmic" evidence="8">
    <location>
        <begin position="309"/>
        <end position="354"/>
    </location>
</feature>
<feature type="region of interest" description="Disordered" evidence="7">
    <location>
        <begin position="333"/>
        <end position="354"/>
    </location>
</feature>
<feature type="short sequence motif" description="'Ionic lock' involved in activated form stabilization" evidence="1">
    <location>
        <begin position="134"/>
        <end position="136"/>
    </location>
</feature>
<feature type="compositionally biased region" description="Low complexity" evidence="7">
    <location>
        <begin position="334"/>
        <end position="354"/>
    </location>
</feature>
<feature type="site" description="Plays an important role in the conformation switch to the active conformation" evidence="1">
    <location>
        <position position="113"/>
    </location>
</feature>
<feature type="modified residue" description="N6-(retinylidene)lysine" evidence="1">
    <location>
        <position position="296"/>
    </location>
</feature>
<feature type="lipid moiety-binding region" description="S-palmitoyl cysteine" evidence="1">
    <location>
        <position position="322"/>
    </location>
</feature>
<feature type="lipid moiety-binding region" description="S-palmitoyl cysteine" evidence="1">
    <location>
        <position position="323"/>
    </location>
</feature>
<feature type="glycosylation site" description="N-linked (GlcNAc...) asparagine" evidence="5">
    <location>
        <position position="2"/>
    </location>
</feature>
<feature type="glycosylation site" description="N-linked (GlcNAc...) asparagine" evidence="5">
    <location>
        <position position="15"/>
    </location>
</feature>
<feature type="glycosylation site" description="N-linked (GlcNAc...) asparagine" evidence="5">
    <location>
        <position position="200"/>
    </location>
</feature>
<feature type="disulfide bond" evidence="6">
    <location>
        <begin position="110"/>
        <end position="187"/>
    </location>
</feature>
<dbReference type="EMBL" id="Y17585">
    <property type="protein sequence ID" value="CAA76797.1"/>
    <property type="molecule type" value="mRNA"/>
</dbReference>
<dbReference type="SMR" id="O93459"/>
<dbReference type="GlyCosmos" id="O93459">
    <property type="glycosylation" value="3 sites, No reported glycans"/>
</dbReference>
<dbReference type="OrthoDB" id="5962323at2759"/>
<dbReference type="GO" id="GO:0016020">
    <property type="term" value="C:membrane"/>
    <property type="evidence" value="ECO:0000250"/>
    <property type="project" value="UniProtKB"/>
</dbReference>
<dbReference type="GO" id="GO:0097381">
    <property type="term" value="C:photoreceptor disc membrane"/>
    <property type="evidence" value="ECO:0000250"/>
    <property type="project" value="UniProtKB"/>
</dbReference>
<dbReference type="GO" id="GO:0005886">
    <property type="term" value="C:plasma membrane"/>
    <property type="evidence" value="ECO:0000250"/>
    <property type="project" value="UniProtKB"/>
</dbReference>
<dbReference type="GO" id="GO:0005502">
    <property type="term" value="F:11-cis retinal binding"/>
    <property type="evidence" value="ECO:0000250"/>
    <property type="project" value="UniProtKB"/>
</dbReference>
<dbReference type="GO" id="GO:0008020">
    <property type="term" value="F:G protein-coupled photoreceptor activity"/>
    <property type="evidence" value="ECO:0000250"/>
    <property type="project" value="UniProtKB"/>
</dbReference>
<dbReference type="GO" id="GO:0016038">
    <property type="term" value="P:absorption of visible light"/>
    <property type="evidence" value="ECO:0000250"/>
    <property type="project" value="UniProtKB"/>
</dbReference>
<dbReference type="GO" id="GO:0016056">
    <property type="term" value="P:G protein-coupled opsin signaling pathway"/>
    <property type="evidence" value="ECO:0000250"/>
    <property type="project" value="UniProtKB"/>
</dbReference>
<dbReference type="GO" id="GO:0007601">
    <property type="term" value="P:visual perception"/>
    <property type="evidence" value="ECO:0007669"/>
    <property type="project" value="UniProtKB-KW"/>
</dbReference>
<dbReference type="CDD" id="cd15080">
    <property type="entry name" value="7tmA_MWS_opsin"/>
    <property type="match status" value="1"/>
</dbReference>
<dbReference type="FunFam" id="1.20.1070.10:FF:000018">
    <property type="entry name" value="Rhodopsin"/>
    <property type="match status" value="1"/>
</dbReference>
<dbReference type="Gene3D" id="1.20.1070.10">
    <property type="entry name" value="Rhodopsin 7-helix transmembrane proteins"/>
    <property type="match status" value="1"/>
</dbReference>
<dbReference type="InterPro" id="IPR050125">
    <property type="entry name" value="GPCR_opsins"/>
</dbReference>
<dbReference type="InterPro" id="IPR000276">
    <property type="entry name" value="GPCR_Rhodpsn"/>
</dbReference>
<dbReference type="InterPro" id="IPR017452">
    <property type="entry name" value="GPCR_Rhodpsn_7TM"/>
</dbReference>
<dbReference type="InterPro" id="IPR001760">
    <property type="entry name" value="Opsin"/>
</dbReference>
<dbReference type="InterPro" id="IPR027430">
    <property type="entry name" value="Retinal_BS"/>
</dbReference>
<dbReference type="InterPro" id="IPR000732">
    <property type="entry name" value="Rhodopsin"/>
</dbReference>
<dbReference type="InterPro" id="IPR019477">
    <property type="entry name" value="Rhodopsin_N"/>
</dbReference>
<dbReference type="PANTHER" id="PTHR24240">
    <property type="entry name" value="OPSIN"/>
    <property type="match status" value="1"/>
</dbReference>
<dbReference type="Pfam" id="PF00001">
    <property type="entry name" value="7tm_1"/>
    <property type="match status" value="1"/>
</dbReference>
<dbReference type="Pfam" id="PF10413">
    <property type="entry name" value="Rhodopsin_N"/>
    <property type="match status" value="1"/>
</dbReference>
<dbReference type="PRINTS" id="PR00237">
    <property type="entry name" value="GPCRRHODOPSN"/>
</dbReference>
<dbReference type="PRINTS" id="PR00238">
    <property type="entry name" value="OPSIN"/>
</dbReference>
<dbReference type="PRINTS" id="PR00579">
    <property type="entry name" value="RHODOPSIN"/>
</dbReference>
<dbReference type="SUPFAM" id="SSF81321">
    <property type="entry name" value="Family A G protein-coupled receptor-like"/>
    <property type="match status" value="1"/>
</dbReference>
<dbReference type="PROSITE" id="PS00237">
    <property type="entry name" value="G_PROTEIN_RECEP_F1_1"/>
    <property type="match status" value="1"/>
</dbReference>
<dbReference type="PROSITE" id="PS50262">
    <property type="entry name" value="G_PROTEIN_RECEP_F1_2"/>
    <property type="match status" value="1"/>
</dbReference>
<dbReference type="PROSITE" id="PS00238">
    <property type="entry name" value="OPSIN"/>
    <property type="match status" value="1"/>
</dbReference>
<accession>O93459</accession>
<keyword id="KW-0966">Cell projection</keyword>
<keyword id="KW-0157">Chromophore</keyword>
<keyword id="KW-1015">Disulfide bond</keyword>
<keyword id="KW-0297">G-protein coupled receptor</keyword>
<keyword id="KW-0325">Glycoprotein</keyword>
<keyword id="KW-0449">Lipoprotein</keyword>
<keyword id="KW-0472">Membrane</keyword>
<keyword id="KW-0564">Palmitate</keyword>
<keyword id="KW-0597">Phosphoprotein</keyword>
<keyword id="KW-0600">Photoreceptor protein</keyword>
<keyword id="KW-0675">Receptor</keyword>
<keyword id="KW-0681">Retinal protein</keyword>
<keyword id="KW-0716">Sensory transduction</keyword>
<keyword id="KW-0807">Transducer</keyword>
<keyword id="KW-0812">Transmembrane</keyword>
<keyword id="KW-1133">Transmembrane helix</keyword>
<keyword id="KW-0844">Vision</keyword>
<protein>
    <recommendedName>
        <fullName>Rhodopsin</fullName>
    </recommendedName>
</protein>